<reference key="1">
    <citation type="journal article" date="2005" name="Nature">
        <title>The genome of the protist parasite Entamoeba histolytica.</title>
        <authorList>
            <person name="Loftus B.J."/>
            <person name="Anderson I."/>
            <person name="Davies R."/>
            <person name="Alsmark U.C."/>
            <person name="Samuelson J."/>
            <person name="Amedeo P."/>
            <person name="Roncaglia P."/>
            <person name="Berriman M."/>
            <person name="Hirt R.P."/>
            <person name="Mann B.J."/>
            <person name="Nozaki T."/>
            <person name="Suh B."/>
            <person name="Pop M."/>
            <person name="Duchene M."/>
            <person name="Ackers J."/>
            <person name="Tannich E."/>
            <person name="Leippe M."/>
            <person name="Hofer M."/>
            <person name="Bruchhaus I."/>
            <person name="Willhoeft U."/>
            <person name="Bhattacharya A."/>
            <person name="Chillingworth T."/>
            <person name="Churcher C.M."/>
            <person name="Hance Z."/>
            <person name="Harris B."/>
            <person name="Harris D."/>
            <person name="Jagels K."/>
            <person name="Moule S."/>
            <person name="Mungall K.L."/>
            <person name="Ormond D."/>
            <person name="Squares R."/>
            <person name="Whitehead S."/>
            <person name="Quail M.A."/>
            <person name="Rabbinowitsch E."/>
            <person name="Norbertczak H."/>
            <person name="Price C."/>
            <person name="Wang Z."/>
            <person name="Guillen N."/>
            <person name="Gilchrist C."/>
            <person name="Stroup S.E."/>
            <person name="Bhattacharya S."/>
            <person name="Lohia A."/>
            <person name="Foster P.G."/>
            <person name="Sicheritz-Ponten T."/>
            <person name="Weber C."/>
            <person name="Singh U."/>
            <person name="Mukherjee C."/>
            <person name="El-Sayed N.M.A."/>
            <person name="Petri W.A."/>
            <person name="Clark C.G."/>
            <person name="Embley T.M."/>
            <person name="Barrell B.G."/>
            <person name="Fraser C.M."/>
            <person name="Hall N."/>
        </authorList>
    </citation>
    <scope>NUCLEOTIDE SEQUENCE [LARGE SCALE GENOMIC DNA]</scope>
    <source>
        <strain>ATCC 30459 / HM-1:IMSS / ABRM</strain>
    </source>
</reference>
<reference key="2">
    <citation type="journal article" date="2010" name="PLoS Negl. Trop. Dis.">
        <title>New assembly, reannotation and analysis of the Entamoeba histolytica genome reveal new genomic features and protein content information.</title>
        <authorList>
            <person name="Lorenzi H.A."/>
            <person name="Puiu D."/>
            <person name="Miller J.R."/>
            <person name="Brinkac L.M."/>
            <person name="Amedeo P."/>
            <person name="Hall N."/>
            <person name="Caler E.V."/>
        </authorList>
    </citation>
    <scope>GENOME REANNOTATION</scope>
    <source>
        <strain>ATCC 30459 / HM-1:IMSS / ABRM</strain>
    </source>
</reference>
<protein>
    <recommendedName>
        <fullName evidence="1">ATPase ASNA1 homolog</fullName>
        <ecNumber evidence="1">3.6.-.-</ecNumber>
    </recommendedName>
    <alternativeName>
        <fullName evidence="1">Arsenical pump-driving ATPase homolog</fullName>
    </alternativeName>
    <alternativeName>
        <fullName evidence="1">Arsenite-stimulated ATPase</fullName>
    </alternativeName>
</protein>
<accession>C4LY44</accession>
<organism>
    <name type="scientific">Entamoeba histolytica (strain ATCC 30459 / HM-1:IMSS / ABRM)</name>
    <dbReference type="NCBI Taxonomy" id="294381"/>
    <lineage>
        <taxon>Eukaryota</taxon>
        <taxon>Amoebozoa</taxon>
        <taxon>Evosea</taxon>
        <taxon>Archamoebae</taxon>
        <taxon>Mastigamoebida</taxon>
        <taxon>Entamoebidae</taxon>
        <taxon>Entamoeba</taxon>
    </lineage>
</organism>
<evidence type="ECO:0000255" key="1">
    <source>
        <dbReference type="HAMAP-Rule" id="MF_03112"/>
    </source>
</evidence>
<dbReference type="EC" id="3.6.-.-" evidence="1"/>
<dbReference type="EMBL" id="DS571175">
    <property type="protein sequence ID" value="EAL43902.1"/>
    <property type="molecule type" value="Genomic_DNA"/>
</dbReference>
<dbReference type="RefSeq" id="XP_649286.1">
    <property type="nucleotide sequence ID" value="XM_644194.2"/>
</dbReference>
<dbReference type="SMR" id="C4LY44"/>
<dbReference type="FunCoup" id="C4LY44">
    <property type="interactions" value="728"/>
</dbReference>
<dbReference type="STRING" id="5759.C4LY44"/>
<dbReference type="GeneID" id="3403581"/>
<dbReference type="KEGG" id="ehi:EHI_177400"/>
<dbReference type="VEuPathDB" id="AmoebaDB:EHI5A_258110"/>
<dbReference type="VEuPathDB" id="AmoebaDB:EHI_177400"/>
<dbReference type="VEuPathDB" id="AmoebaDB:KM1_311500"/>
<dbReference type="eggNOG" id="KOG2825">
    <property type="taxonomic scope" value="Eukaryota"/>
</dbReference>
<dbReference type="InParanoid" id="C4LY44"/>
<dbReference type="OMA" id="MDAPYEF"/>
<dbReference type="OrthoDB" id="1770at2759"/>
<dbReference type="Proteomes" id="UP000001926">
    <property type="component" value="Partially assembled WGS sequence"/>
</dbReference>
<dbReference type="GO" id="GO:0043529">
    <property type="term" value="C:GET complex"/>
    <property type="evidence" value="ECO:0000318"/>
    <property type="project" value="GO_Central"/>
</dbReference>
<dbReference type="GO" id="GO:0005524">
    <property type="term" value="F:ATP binding"/>
    <property type="evidence" value="ECO:0007669"/>
    <property type="project" value="UniProtKB-UniRule"/>
</dbReference>
<dbReference type="GO" id="GO:0016887">
    <property type="term" value="F:ATP hydrolysis activity"/>
    <property type="evidence" value="ECO:0000318"/>
    <property type="project" value="GO_Central"/>
</dbReference>
<dbReference type="GO" id="GO:0046872">
    <property type="term" value="F:metal ion binding"/>
    <property type="evidence" value="ECO:0007669"/>
    <property type="project" value="UniProtKB-KW"/>
</dbReference>
<dbReference type="GO" id="GO:0071816">
    <property type="term" value="P:tail-anchored membrane protein insertion into ER membrane"/>
    <property type="evidence" value="ECO:0000318"/>
    <property type="project" value="GO_Central"/>
</dbReference>
<dbReference type="CDD" id="cd02035">
    <property type="entry name" value="ArsA"/>
    <property type="match status" value="1"/>
</dbReference>
<dbReference type="FunFam" id="3.40.50.300:FF:003568">
    <property type="entry name" value="ATPase ASNA1 homolog"/>
    <property type="match status" value="1"/>
</dbReference>
<dbReference type="Gene3D" id="3.40.50.300">
    <property type="entry name" value="P-loop containing nucleotide triphosphate hydrolases"/>
    <property type="match status" value="1"/>
</dbReference>
<dbReference type="HAMAP" id="MF_03112">
    <property type="entry name" value="Asna1_Get3"/>
    <property type="match status" value="1"/>
</dbReference>
<dbReference type="InterPro" id="IPR025723">
    <property type="entry name" value="Anion-transp_ATPase-like_dom"/>
</dbReference>
<dbReference type="InterPro" id="IPR016300">
    <property type="entry name" value="ATPase_ArsA/GET3"/>
</dbReference>
<dbReference type="InterPro" id="IPR027542">
    <property type="entry name" value="ATPase_ArsA/GET3_euk"/>
</dbReference>
<dbReference type="InterPro" id="IPR027417">
    <property type="entry name" value="P-loop_NTPase"/>
</dbReference>
<dbReference type="NCBIfam" id="TIGR00345">
    <property type="entry name" value="GET3_arsA_TRC40"/>
    <property type="match status" value="1"/>
</dbReference>
<dbReference type="PANTHER" id="PTHR10803">
    <property type="entry name" value="ARSENICAL PUMP-DRIVING ATPASE ARSENITE-TRANSLOCATING ATPASE"/>
    <property type="match status" value="1"/>
</dbReference>
<dbReference type="PANTHER" id="PTHR10803:SF3">
    <property type="entry name" value="ATPASE GET3"/>
    <property type="match status" value="1"/>
</dbReference>
<dbReference type="Pfam" id="PF02374">
    <property type="entry name" value="ArsA_ATPase"/>
    <property type="match status" value="1"/>
</dbReference>
<dbReference type="SUPFAM" id="SSF52540">
    <property type="entry name" value="P-loop containing nucleoside triphosphate hydrolases"/>
    <property type="match status" value="1"/>
</dbReference>
<gene>
    <name type="ORF">EHI_177400</name>
</gene>
<sequence>MSLNPPNNLEHIITSQTLKWVFVGGKGGVGKTTTSCSLGVLIADRNPQKKVLIISTDPAHNTSDAFDIKFGAEPKVVPGVPNLSVMEIDVKDAMKGVFDESEQGTNQNGGFGLLSELTGMMGMLKSVPGIDEAIAFSQIINQAQQMNYDLVLFDTAPTGHTLRFLSLPTLLRDMLEKVIKLQDSFGPMMSQFGGMMGMNINFNELKPKMEHMLKTSEQIVEDFTNPNLTTFIPVLIPEFLPLYETERLIQELMNLNMDANSIIVNQILPVNDCCDYCKNKRAIQAKYLGQIDVLYGDFHLIKINMQTNEVRGVAALRAFSKNFEAKH</sequence>
<keyword id="KW-0067">ATP-binding</keyword>
<keyword id="KW-0963">Cytoplasm</keyword>
<keyword id="KW-0256">Endoplasmic reticulum</keyword>
<keyword id="KW-0378">Hydrolase</keyword>
<keyword id="KW-0479">Metal-binding</keyword>
<keyword id="KW-0547">Nucleotide-binding</keyword>
<keyword id="KW-1185">Reference proteome</keyword>
<keyword id="KW-0813">Transport</keyword>
<keyword id="KW-0862">Zinc</keyword>
<feature type="chain" id="PRO_0000388164" description="ATPase ASNA1 homolog">
    <location>
        <begin position="1"/>
        <end position="327"/>
    </location>
</feature>
<feature type="active site" evidence="1">
    <location>
        <position position="57"/>
    </location>
</feature>
<feature type="binding site" evidence="1">
    <location>
        <begin position="26"/>
        <end position="33"/>
    </location>
    <ligand>
        <name>ATP</name>
        <dbReference type="ChEBI" id="CHEBI:30616"/>
    </ligand>
</feature>
<feature type="binding site" evidence="1">
    <location>
        <position position="238"/>
    </location>
    <ligand>
        <name>ATP</name>
        <dbReference type="ChEBI" id="CHEBI:30616"/>
    </ligand>
</feature>
<feature type="binding site" evidence="1">
    <location>
        <position position="265"/>
    </location>
    <ligand>
        <name>ATP</name>
        <dbReference type="ChEBI" id="CHEBI:30616"/>
    </ligand>
</feature>
<feature type="binding site" evidence="1">
    <location>
        <position position="274"/>
    </location>
    <ligand>
        <name>Zn(2+)</name>
        <dbReference type="ChEBI" id="CHEBI:29105"/>
        <note>ligand shared between dimeric partners</note>
    </ligand>
</feature>
<feature type="binding site" evidence="1">
    <location>
        <position position="277"/>
    </location>
    <ligand>
        <name>Zn(2+)</name>
        <dbReference type="ChEBI" id="CHEBI:29105"/>
        <note>ligand shared between dimeric partners</note>
    </ligand>
</feature>
<comment type="function">
    <text evidence="1">ATPase required for the post-translational delivery of tail-anchored (TA) proteins to the endoplasmic reticulum. Recognizes and selectively binds the transmembrane domain of TA proteins in the cytosol. This complex then targets to the endoplasmic reticulum by membrane-bound receptors, where the tail-anchored protein is released for insertion. This process is regulated by ATP binding and hydrolysis. ATP binding drives the homodimer towards the closed dimer state, facilitating recognition of newly synthesized TA membrane proteins. ATP hydrolysis is required for insertion. Subsequently, the homodimer reverts towards the open dimer state, lowering its affinity for the membrane-bound receptor, and returning it to the cytosol to initiate a new round of targeting.</text>
</comment>
<comment type="subunit">
    <text evidence="1">Homodimer.</text>
</comment>
<comment type="subcellular location">
    <subcellularLocation>
        <location evidence="1">Cytoplasm</location>
    </subcellularLocation>
    <subcellularLocation>
        <location evidence="1">Endoplasmic reticulum</location>
    </subcellularLocation>
</comment>
<comment type="similarity">
    <text evidence="1">Belongs to the arsA ATPase family.</text>
</comment>
<proteinExistence type="inferred from homology"/>
<name>ASNA_ENTH1</name>